<gene>
    <name evidence="2" type="primary">dctA</name>
</gene>
<organism>
    <name type="scientific">Pseudomonas chlororaphis</name>
    <name type="common">Pseudomonas aureofaciens</name>
    <dbReference type="NCBI Taxonomy" id="333"/>
    <lineage>
        <taxon>Bacteria</taxon>
        <taxon>Pseudomonadati</taxon>
        <taxon>Pseudomonadota</taxon>
        <taxon>Gammaproteobacteria</taxon>
        <taxon>Pseudomonadales</taxon>
        <taxon>Pseudomonadaceae</taxon>
        <taxon>Pseudomonas</taxon>
    </lineage>
</organism>
<protein>
    <recommendedName>
        <fullName evidence="2">C4-dicarboxylate transport protein</fullName>
    </recommendedName>
</protein>
<proteinExistence type="inferred from homology"/>
<dbReference type="EMBL" id="AY210439">
    <property type="protein sequence ID" value="AAO60164.1"/>
    <property type="molecule type" value="Genomic_DNA"/>
</dbReference>
<dbReference type="SMR" id="Q848I3"/>
<dbReference type="TCDB" id="2.A.23.1.10">
    <property type="family name" value="the dicarboxylate/amino acid:cation (na(+) or h(+)) symporter (daacs) family"/>
</dbReference>
<dbReference type="GO" id="GO:0005886">
    <property type="term" value="C:plasma membrane"/>
    <property type="evidence" value="ECO:0007669"/>
    <property type="project" value="UniProtKB-SubCell"/>
</dbReference>
<dbReference type="GO" id="GO:0015138">
    <property type="term" value="F:fumarate transmembrane transporter activity"/>
    <property type="evidence" value="ECO:0007669"/>
    <property type="project" value="TreeGrafter"/>
</dbReference>
<dbReference type="GO" id="GO:0015366">
    <property type="term" value="F:malate:proton symporter activity"/>
    <property type="evidence" value="ECO:0007669"/>
    <property type="project" value="TreeGrafter"/>
</dbReference>
<dbReference type="GO" id="GO:0015141">
    <property type="term" value="F:succinate transmembrane transporter activity"/>
    <property type="evidence" value="ECO:0007669"/>
    <property type="project" value="TreeGrafter"/>
</dbReference>
<dbReference type="GO" id="GO:0070778">
    <property type="term" value="P:L-aspartate transmembrane transport"/>
    <property type="evidence" value="ECO:0007669"/>
    <property type="project" value="TreeGrafter"/>
</dbReference>
<dbReference type="FunFam" id="1.10.3860.10:FF:000001">
    <property type="entry name" value="C4-dicarboxylate transport protein"/>
    <property type="match status" value="1"/>
</dbReference>
<dbReference type="Gene3D" id="1.10.3860.10">
    <property type="entry name" value="Sodium:dicarboxylate symporter"/>
    <property type="match status" value="1"/>
</dbReference>
<dbReference type="HAMAP" id="MF_01300">
    <property type="entry name" value="C4_dicarb_transport"/>
    <property type="match status" value="1"/>
</dbReference>
<dbReference type="InterPro" id="IPR023954">
    <property type="entry name" value="C4_dicarb_transport"/>
</dbReference>
<dbReference type="InterPro" id="IPR001991">
    <property type="entry name" value="Na-dicarboxylate_symporter"/>
</dbReference>
<dbReference type="InterPro" id="IPR018107">
    <property type="entry name" value="Na-dicarboxylate_symporter_CS"/>
</dbReference>
<dbReference type="InterPro" id="IPR036458">
    <property type="entry name" value="Na:dicarbo_symporter_sf"/>
</dbReference>
<dbReference type="NCBIfam" id="NF002461">
    <property type="entry name" value="PRK01663.1"/>
    <property type="match status" value="1"/>
</dbReference>
<dbReference type="NCBIfam" id="NF009587">
    <property type="entry name" value="PRK13027.1"/>
    <property type="match status" value="1"/>
</dbReference>
<dbReference type="PANTHER" id="PTHR42865:SF1">
    <property type="entry name" value="AEROBIC C4-DICARBOXYLATE TRANSPORT PROTEIN"/>
    <property type="match status" value="1"/>
</dbReference>
<dbReference type="PANTHER" id="PTHR42865">
    <property type="entry name" value="PROTON/GLUTAMATE-ASPARTATE SYMPORTER"/>
    <property type="match status" value="1"/>
</dbReference>
<dbReference type="Pfam" id="PF00375">
    <property type="entry name" value="SDF"/>
    <property type="match status" value="1"/>
</dbReference>
<dbReference type="PRINTS" id="PR00173">
    <property type="entry name" value="EDTRNSPORT"/>
</dbReference>
<dbReference type="SUPFAM" id="SSF118215">
    <property type="entry name" value="Proton glutamate symport protein"/>
    <property type="match status" value="1"/>
</dbReference>
<dbReference type="PROSITE" id="PS00713">
    <property type="entry name" value="NA_DICARBOXYL_SYMP_1"/>
    <property type="match status" value="1"/>
</dbReference>
<dbReference type="PROSITE" id="PS00714">
    <property type="entry name" value="NA_DICARBOXYL_SYMP_2"/>
    <property type="match status" value="1"/>
</dbReference>
<accession>Q848I3</accession>
<name>DCTA_PSECL</name>
<feature type="chain" id="PRO_0000202099" description="C4-dicarboxylate transport protein">
    <location>
        <begin position="1"/>
        <end position="444"/>
    </location>
</feature>
<feature type="transmembrane region" description="Helical" evidence="2">
    <location>
        <begin position="7"/>
        <end position="29"/>
    </location>
</feature>
<feature type="transmembrane region" description="Helical" evidence="2">
    <location>
        <begin position="44"/>
        <end position="66"/>
    </location>
</feature>
<feature type="transmembrane region" description="Helical" evidence="2">
    <location>
        <begin position="79"/>
        <end position="101"/>
    </location>
</feature>
<feature type="transmembrane region" description="Helical" evidence="2">
    <location>
        <begin position="143"/>
        <end position="165"/>
    </location>
</feature>
<feature type="transmembrane region" description="Helical" evidence="2">
    <location>
        <begin position="186"/>
        <end position="208"/>
    </location>
</feature>
<feature type="transmembrane region" description="Helical" evidence="2">
    <location>
        <begin position="221"/>
        <end position="243"/>
    </location>
</feature>
<feature type="transmembrane region" description="Helical" evidence="2">
    <location>
        <begin position="291"/>
        <end position="313"/>
    </location>
</feature>
<feature type="transmembrane region" description="Helical" evidence="2">
    <location>
        <begin position="353"/>
        <end position="375"/>
    </location>
</feature>
<feature type="region of interest" description="Disordered" evidence="3">
    <location>
        <begin position="418"/>
        <end position="444"/>
    </location>
</feature>
<reference key="1">
    <citation type="submission" date="2003-01" db="EMBL/GenBank/DDBJ databases">
        <title>Transcriptional regulation and mutational analysis of a dctA gene encoding a dicarboxylic acid transporter protein from Pseudomonas chlororaphis O6.</title>
        <authorList>
            <person name="Nam H.S."/>
            <person name="Spencer M."/>
            <person name="Anderson A.J."/>
            <person name="Cho B.H."/>
            <person name="Kim Y.C."/>
        </authorList>
    </citation>
    <scope>NUCLEOTIDE SEQUENCE [GENOMIC DNA]</scope>
    <source>
        <strain>O6</strain>
    </source>
</reference>
<sequence>MTTRQPLYKSLYFQVIVAIAIGILLGHFYPQTGVALKPLGDGFIKLIKMVIAPIIFCTVVSGIAGMQNMKSVGKTGGYALLYFEIVSTIALLIGLVVVNVVQPGNGMHIDVSTLDASKVAAYVTAGKDQSIVGFILNVIPNTIVGAFANGDILQVLMFSVIFGFALHRLGAYGKPVLDFIDRFAHVMFNIINMIMKLAPIGALGAMAFTIGAYGVGSLVQLGQLMICFYITCVLFVLVVLGAICRAHGFSVLKLIRYIREELLIVLGTSSSESALPRMLIKMERLGAKKSVVGLVIPTGYSFNLDGTSIYLTMAAVFIAQATDTHMDITHQITLLLVLLLSSKGAAGVTGSGFIVLAATLSAVGHLPVAGLALILGIDRFMSEARALTNLVGNAVATVVVAKWVKELDEDQLQAELASGGRAISDTREEDDLGVAEGPTPTTVK</sequence>
<keyword id="KW-0997">Cell inner membrane</keyword>
<keyword id="KW-1003">Cell membrane</keyword>
<keyword id="KW-0472">Membrane</keyword>
<keyword id="KW-0769">Symport</keyword>
<keyword id="KW-0812">Transmembrane</keyword>
<keyword id="KW-1133">Transmembrane helix</keyword>
<keyword id="KW-0813">Transport</keyword>
<evidence type="ECO:0000250" key="1"/>
<evidence type="ECO:0000255" key="2">
    <source>
        <dbReference type="HAMAP-Rule" id="MF_01300"/>
    </source>
</evidence>
<evidence type="ECO:0000256" key="3">
    <source>
        <dbReference type="SAM" id="MobiDB-lite"/>
    </source>
</evidence>
<comment type="function">
    <text evidence="1">Responsible for the transport of dicarboxylates such as succinate, fumarate, and malate from the periplasm across the inner membrane.</text>
</comment>
<comment type="subcellular location">
    <subcellularLocation>
        <location evidence="2">Cell inner membrane</location>
        <topology evidence="2">Multi-pass membrane protein</topology>
    </subcellularLocation>
</comment>
<comment type="similarity">
    <text evidence="2">Belongs to the dicarboxylate/amino acid:cation symporter (DAACS) (TC 2.A.23) family.</text>
</comment>